<name>DNAJ_PSEA8</name>
<reference key="1">
    <citation type="journal article" date="2009" name="Genome Res.">
        <title>Newly introduced genomic prophage islands are critical determinants of in vivo competitiveness in the Liverpool epidemic strain of Pseudomonas aeruginosa.</title>
        <authorList>
            <person name="Winstanley C."/>
            <person name="Langille M.G.I."/>
            <person name="Fothergill J.L."/>
            <person name="Kukavica-Ibrulj I."/>
            <person name="Paradis-Bleau C."/>
            <person name="Sanschagrin F."/>
            <person name="Thomson N.R."/>
            <person name="Winsor G.L."/>
            <person name="Quail M.A."/>
            <person name="Lennard N."/>
            <person name="Bignell A."/>
            <person name="Clarke L."/>
            <person name="Seeger K."/>
            <person name="Saunders D."/>
            <person name="Harris D."/>
            <person name="Parkhill J."/>
            <person name="Hancock R.E.W."/>
            <person name="Brinkman F.S.L."/>
            <person name="Levesque R.C."/>
        </authorList>
    </citation>
    <scope>NUCLEOTIDE SEQUENCE [LARGE SCALE GENOMIC DNA]</scope>
    <source>
        <strain>LESB58</strain>
    </source>
</reference>
<sequence length="377" mass="40260">MAKRDFYEVLGVERGASEADLKKAYRRLAMKYHPDRNPGDKEAEDKFKEANEAYEVLSDASKRAAYDQYGHAGVDPNMGGGAGAGFGGASFSDIFGDVFSDFFGGGGARGGSRGGAQRGADLRYTLDLDLEEAVRGTTVTIRVPTLVGCKTCNGSGAKPGTTPVTCTTCGGIGQVRMQQGFFSVQQTCPRCHGTGKMISDPCGSCHGQGRVEEQKTLSVKVPAGVDTGDRIRLTGEGEAGSMGGPAGDLYVVVNVREHPIFQRDGKHLYCEVPISFADAALGGELEVPTLDGRVKLKIPESTQTGKLFRLRGKGVAPVRGGGAGDLMCKVVVETPVNLDKRQRELLEEFRKSLQSDTSHSPKASGWFEGMKRFFDDL</sequence>
<accession>B7V1H2</accession>
<feature type="chain" id="PRO_1000137712" description="Chaperone protein DnaJ">
    <location>
        <begin position="1"/>
        <end position="377"/>
    </location>
</feature>
<feature type="domain" description="J" evidence="1">
    <location>
        <begin position="5"/>
        <end position="70"/>
    </location>
</feature>
<feature type="repeat" description="CXXCXGXG motif">
    <location>
        <begin position="149"/>
        <end position="156"/>
    </location>
</feature>
<feature type="repeat" description="CXXCXGXG motif">
    <location>
        <begin position="166"/>
        <end position="173"/>
    </location>
</feature>
<feature type="repeat" description="CXXCXGXG motif">
    <location>
        <begin position="188"/>
        <end position="195"/>
    </location>
</feature>
<feature type="repeat" description="CXXCXGXG motif">
    <location>
        <begin position="202"/>
        <end position="209"/>
    </location>
</feature>
<feature type="zinc finger region" description="CR-type" evidence="1">
    <location>
        <begin position="136"/>
        <end position="214"/>
    </location>
</feature>
<feature type="binding site" evidence="1">
    <location>
        <position position="149"/>
    </location>
    <ligand>
        <name>Zn(2+)</name>
        <dbReference type="ChEBI" id="CHEBI:29105"/>
        <label>1</label>
    </ligand>
</feature>
<feature type="binding site" evidence="1">
    <location>
        <position position="152"/>
    </location>
    <ligand>
        <name>Zn(2+)</name>
        <dbReference type="ChEBI" id="CHEBI:29105"/>
        <label>1</label>
    </ligand>
</feature>
<feature type="binding site" evidence="1">
    <location>
        <position position="166"/>
    </location>
    <ligand>
        <name>Zn(2+)</name>
        <dbReference type="ChEBI" id="CHEBI:29105"/>
        <label>2</label>
    </ligand>
</feature>
<feature type="binding site" evidence="1">
    <location>
        <position position="169"/>
    </location>
    <ligand>
        <name>Zn(2+)</name>
        <dbReference type="ChEBI" id="CHEBI:29105"/>
        <label>2</label>
    </ligand>
</feature>
<feature type="binding site" evidence="1">
    <location>
        <position position="188"/>
    </location>
    <ligand>
        <name>Zn(2+)</name>
        <dbReference type="ChEBI" id="CHEBI:29105"/>
        <label>2</label>
    </ligand>
</feature>
<feature type="binding site" evidence="1">
    <location>
        <position position="191"/>
    </location>
    <ligand>
        <name>Zn(2+)</name>
        <dbReference type="ChEBI" id="CHEBI:29105"/>
        <label>2</label>
    </ligand>
</feature>
<feature type="binding site" evidence="1">
    <location>
        <position position="202"/>
    </location>
    <ligand>
        <name>Zn(2+)</name>
        <dbReference type="ChEBI" id="CHEBI:29105"/>
        <label>1</label>
    </ligand>
</feature>
<feature type="binding site" evidence="1">
    <location>
        <position position="205"/>
    </location>
    <ligand>
        <name>Zn(2+)</name>
        <dbReference type="ChEBI" id="CHEBI:29105"/>
        <label>1</label>
    </ligand>
</feature>
<protein>
    <recommendedName>
        <fullName evidence="1">Chaperone protein DnaJ</fullName>
    </recommendedName>
</protein>
<keyword id="KW-0143">Chaperone</keyword>
<keyword id="KW-0963">Cytoplasm</keyword>
<keyword id="KW-0235">DNA replication</keyword>
<keyword id="KW-0479">Metal-binding</keyword>
<keyword id="KW-0677">Repeat</keyword>
<keyword id="KW-0346">Stress response</keyword>
<keyword id="KW-0862">Zinc</keyword>
<keyword id="KW-0863">Zinc-finger</keyword>
<comment type="function">
    <text evidence="1">Participates actively in the response to hyperosmotic and heat shock by preventing the aggregation of stress-denatured proteins and by disaggregating proteins, also in an autonomous, DnaK-independent fashion. Unfolded proteins bind initially to DnaJ; upon interaction with the DnaJ-bound protein, DnaK hydrolyzes its bound ATP, resulting in the formation of a stable complex. GrpE releases ADP from DnaK; ATP binding to DnaK triggers the release of the substrate protein, thus completing the reaction cycle. Several rounds of ATP-dependent interactions between DnaJ, DnaK and GrpE are required for fully efficient folding. Also involved, together with DnaK and GrpE, in the DNA replication of plasmids through activation of initiation proteins.</text>
</comment>
<comment type="cofactor">
    <cofactor evidence="1">
        <name>Zn(2+)</name>
        <dbReference type="ChEBI" id="CHEBI:29105"/>
    </cofactor>
    <text evidence="1">Binds 2 Zn(2+) ions per monomer.</text>
</comment>
<comment type="subunit">
    <text evidence="1">Homodimer.</text>
</comment>
<comment type="subcellular location">
    <subcellularLocation>
        <location evidence="1">Cytoplasm</location>
    </subcellularLocation>
</comment>
<comment type="domain">
    <text evidence="1">The J domain is necessary and sufficient to stimulate DnaK ATPase activity. Zinc center 1 plays an important role in the autonomous, DnaK-independent chaperone activity of DnaJ. Zinc center 2 is essential for interaction with DnaK and for DnaJ activity.</text>
</comment>
<comment type="similarity">
    <text evidence="1">Belongs to the DnaJ family.</text>
</comment>
<organism>
    <name type="scientific">Pseudomonas aeruginosa (strain LESB58)</name>
    <dbReference type="NCBI Taxonomy" id="557722"/>
    <lineage>
        <taxon>Bacteria</taxon>
        <taxon>Pseudomonadati</taxon>
        <taxon>Pseudomonadota</taxon>
        <taxon>Gammaproteobacteria</taxon>
        <taxon>Pseudomonadales</taxon>
        <taxon>Pseudomonadaceae</taxon>
        <taxon>Pseudomonas</taxon>
    </lineage>
</organism>
<dbReference type="EMBL" id="FM209186">
    <property type="protein sequence ID" value="CAW29899.1"/>
    <property type="molecule type" value="Genomic_DNA"/>
</dbReference>
<dbReference type="RefSeq" id="WP_003095211.1">
    <property type="nucleotide sequence ID" value="NC_011770.1"/>
</dbReference>
<dbReference type="SMR" id="B7V1H2"/>
<dbReference type="KEGG" id="pag:PLES_51451"/>
<dbReference type="HOGENOM" id="CLU_017633_0_7_6"/>
<dbReference type="GO" id="GO:0005737">
    <property type="term" value="C:cytoplasm"/>
    <property type="evidence" value="ECO:0007669"/>
    <property type="project" value="UniProtKB-SubCell"/>
</dbReference>
<dbReference type="GO" id="GO:0005524">
    <property type="term" value="F:ATP binding"/>
    <property type="evidence" value="ECO:0007669"/>
    <property type="project" value="InterPro"/>
</dbReference>
<dbReference type="GO" id="GO:0031072">
    <property type="term" value="F:heat shock protein binding"/>
    <property type="evidence" value="ECO:0007669"/>
    <property type="project" value="InterPro"/>
</dbReference>
<dbReference type="GO" id="GO:0051082">
    <property type="term" value="F:unfolded protein binding"/>
    <property type="evidence" value="ECO:0007669"/>
    <property type="project" value="UniProtKB-UniRule"/>
</dbReference>
<dbReference type="GO" id="GO:0008270">
    <property type="term" value="F:zinc ion binding"/>
    <property type="evidence" value="ECO:0007669"/>
    <property type="project" value="UniProtKB-UniRule"/>
</dbReference>
<dbReference type="GO" id="GO:0051085">
    <property type="term" value="P:chaperone cofactor-dependent protein refolding"/>
    <property type="evidence" value="ECO:0007669"/>
    <property type="project" value="TreeGrafter"/>
</dbReference>
<dbReference type="GO" id="GO:0006260">
    <property type="term" value="P:DNA replication"/>
    <property type="evidence" value="ECO:0007669"/>
    <property type="project" value="UniProtKB-KW"/>
</dbReference>
<dbReference type="GO" id="GO:0042026">
    <property type="term" value="P:protein refolding"/>
    <property type="evidence" value="ECO:0007669"/>
    <property type="project" value="TreeGrafter"/>
</dbReference>
<dbReference type="GO" id="GO:0009408">
    <property type="term" value="P:response to heat"/>
    <property type="evidence" value="ECO:0007669"/>
    <property type="project" value="InterPro"/>
</dbReference>
<dbReference type="CDD" id="cd06257">
    <property type="entry name" value="DnaJ"/>
    <property type="match status" value="1"/>
</dbReference>
<dbReference type="CDD" id="cd10747">
    <property type="entry name" value="DnaJ_C"/>
    <property type="match status" value="1"/>
</dbReference>
<dbReference type="CDD" id="cd10719">
    <property type="entry name" value="DnaJ_zf"/>
    <property type="match status" value="1"/>
</dbReference>
<dbReference type="FunFam" id="1.10.287.110:FF:000051">
    <property type="entry name" value="Molecular chaperone DnaJ"/>
    <property type="match status" value="1"/>
</dbReference>
<dbReference type="FunFam" id="2.10.230.10:FF:000002">
    <property type="entry name" value="Molecular chaperone DnaJ"/>
    <property type="match status" value="1"/>
</dbReference>
<dbReference type="FunFam" id="2.60.260.20:FF:000004">
    <property type="entry name" value="Molecular chaperone DnaJ"/>
    <property type="match status" value="1"/>
</dbReference>
<dbReference type="Gene3D" id="1.10.287.110">
    <property type="entry name" value="DnaJ domain"/>
    <property type="match status" value="1"/>
</dbReference>
<dbReference type="Gene3D" id="2.10.230.10">
    <property type="entry name" value="Heat shock protein DnaJ, cysteine-rich domain"/>
    <property type="match status" value="1"/>
</dbReference>
<dbReference type="Gene3D" id="2.60.260.20">
    <property type="entry name" value="Urease metallochaperone UreE, N-terminal domain"/>
    <property type="match status" value="2"/>
</dbReference>
<dbReference type="HAMAP" id="MF_01152">
    <property type="entry name" value="DnaJ"/>
    <property type="match status" value="1"/>
</dbReference>
<dbReference type="InterPro" id="IPR012724">
    <property type="entry name" value="DnaJ"/>
</dbReference>
<dbReference type="InterPro" id="IPR002939">
    <property type="entry name" value="DnaJ_C"/>
</dbReference>
<dbReference type="InterPro" id="IPR001623">
    <property type="entry name" value="DnaJ_domain"/>
</dbReference>
<dbReference type="InterPro" id="IPR018253">
    <property type="entry name" value="DnaJ_domain_CS"/>
</dbReference>
<dbReference type="InterPro" id="IPR008971">
    <property type="entry name" value="HSP40/DnaJ_pept-bd"/>
</dbReference>
<dbReference type="InterPro" id="IPR001305">
    <property type="entry name" value="HSP_DnaJ_Cys-rich_dom"/>
</dbReference>
<dbReference type="InterPro" id="IPR036410">
    <property type="entry name" value="HSP_DnaJ_Cys-rich_dom_sf"/>
</dbReference>
<dbReference type="InterPro" id="IPR036869">
    <property type="entry name" value="J_dom_sf"/>
</dbReference>
<dbReference type="NCBIfam" id="TIGR02349">
    <property type="entry name" value="DnaJ_bact"/>
    <property type="match status" value="1"/>
</dbReference>
<dbReference type="NCBIfam" id="NF008035">
    <property type="entry name" value="PRK10767.1"/>
    <property type="match status" value="1"/>
</dbReference>
<dbReference type="PANTHER" id="PTHR43096:SF48">
    <property type="entry name" value="CHAPERONE PROTEIN DNAJ"/>
    <property type="match status" value="1"/>
</dbReference>
<dbReference type="PANTHER" id="PTHR43096">
    <property type="entry name" value="DNAJ HOMOLOG 1, MITOCHONDRIAL-RELATED"/>
    <property type="match status" value="1"/>
</dbReference>
<dbReference type="Pfam" id="PF00226">
    <property type="entry name" value="DnaJ"/>
    <property type="match status" value="1"/>
</dbReference>
<dbReference type="Pfam" id="PF01556">
    <property type="entry name" value="DnaJ_C"/>
    <property type="match status" value="1"/>
</dbReference>
<dbReference type="Pfam" id="PF00684">
    <property type="entry name" value="DnaJ_CXXCXGXG"/>
    <property type="match status" value="1"/>
</dbReference>
<dbReference type="PRINTS" id="PR00625">
    <property type="entry name" value="JDOMAIN"/>
</dbReference>
<dbReference type="SMART" id="SM00271">
    <property type="entry name" value="DnaJ"/>
    <property type="match status" value="1"/>
</dbReference>
<dbReference type="SUPFAM" id="SSF46565">
    <property type="entry name" value="Chaperone J-domain"/>
    <property type="match status" value="1"/>
</dbReference>
<dbReference type="SUPFAM" id="SSF57938">
    <property type="entry name" value="DnaJ/Hsp40 cysteine-rich domain"/>
    <property type="match status" value="1"/>
</dbReference>
<dbReference type="SUPFAM" id="SSF49493">
    <property type="entry name" value="HSP40/DnaJ peptide-binding domain"/>
    <property type="match status" value="2"/>
</dbReference>
<dbReference type="PROSITE" id="PS00636">
    <property type="entry name" value="DNAJ_1"/>
    <property type="match status" value="1"/>
</dbReference>
<dbReference type="PROSITE" id="PS50076">
    <property type="entry name" value="DNAJ_2"/>
    <property type="match status" value="1"/>
</dbReference>
<dbReference type="PROSITE" id="PS51188">
    <property type="entry name" value="ZF_CR"/>
    <property type="match status" value="1"/>
</dbReference>
<proteinExistence type="inferred from homology"/>
<gene>
    <name evidence="1" type="primary">dnaJ</name>
    <name type="ordered locus">PLES_51451</name>
</gene>
<evidence type="ECO:0000255" key="1">
    <source>
        <dbReference type="HAMAP-Rule" id="MF_01152"/>
    </source>
</evidence>